<protein>
    <recommendedName>
        <fullName evidence="2">CTP synthase</fullName>
        <ecNumber evidence="2">6.3.4.2</ecNumber>
    </recommendedName>
    <alternativeName>
        <fullName evidence="2">Cytidine 5'-triphosphate synthase</fullName>
    </alternativeName>
    <alternativeName>
        <fullName evidence="2">Cytidine triphosphate synthetase</fullName>
        <shortName evidence="2">CTP synthetase</shortName>
        <shortName evidence="2">CTPS</shortName>
    </alternativeName>
    <alternativeName>
        <fullName evidence="2">UTP--ammonia ligase</fullName>
    </alternativeName>
</protein>
<accession>P65921</accession>
<accession>Q8XEN5</accession>
<gene>
    <name evidence="2" type="primary">pyrG</name>
    <name type="ordered locus">STM2953</name>
</gene>
<evidence type="ECO:0000250" key="1"/>
<evidence type="ECO:0000255" key="2">
    <source>
        <dbReference type="HAMAP-Rule" id="MF_01227"/>
    </source>
</evidence>
<reference key="1">
    <citation type="journal article" date="2001" name="Nature">
        <title>Complete genome sequence of Salmonella enterica serovar Typhimurium LT2.</title>
        <authorList>
            <person name="McClelland M."/>
            <person name="Sanderson K.E."/>
            <person name="Spieth J."/>
            <person name="Clifton S.W."/>
            <person name="Latreille P."/>
            <person name="Courtney L."/>
            <person name="Porwollik S."/>
            <person name="Ali J."/>
            <person name="Dante M."/>
            <person name="Du F."/>
            <person name="Hou S."/>
            <person name="Layman D."/>
            <person name="Leonard S."/>
            <person name="Nguyen C."/>
            <person name="Scott K."/>
            <person name="Holmes A."/>
            <person name="Grewal N."/>
            <person name="Mulvaney E."/>
            <person name="Ryan E."/>
            <person name="Sun H."/>
            <person name="Florea L."/>
            <person name="Miller W."/>
            <person name="Stoneking T."/>
            <person name="Nhan M."/>
            <person name="Waterston R."/>
            <person name="Wilson R.K."/>
        </authorList>
    </citation>
    <scope>NUCLEOTIDE SEQUENCE [LARGE SCALE GENOMIC DNA]</scope>
    <source>
        <strain>LT2 / SGSC1412 / ATCC 700720</strain>
    </source>
</reference>
<comment type="function">
    <text evidence="2">Catalyzes the ATP-dependent amination of UTP to CTP with either L-glutamine or ammonia as the source of nitrogen. Regulates intracellular CTP levels through interactions with the four ribonucleotide triphosphates.</text>
</comment>
<comment type="catalytic activity">
    <reaction evidence="2">
        <text>UTP + L-glutamine + ATP + H2O = CTP + L-glutamate + ADP + phosphate + 2 H(+)</text>
        <dbReference type="Rhea" id="RHEA:26426"/>
        <dbReference type="ChEBI" id="CHEBI:15377"/>
        <dbReference type="ChEBI" id="CHEBI:15378"/>
        <dbReference type="ChEBI" id="CHEBI:29985"/>
        <dbReference type="ChEBI" id="CHEBI:30616"/>
        <dbReference type="ChEBI" id="CHEBI:37563"/>
        <dbReference type="ChEBI" id="CHEBI:43474"/>
        <dbReference type="ChEBI" id="CHEBI:46398"/>
        <dbReference type="ChEBI" id="CHEBI:58359"/>
        <dbReference type="ChEBI" id="CHEBI:456216"/>
        <dbReference type="EC" id="6.3.4.2"/>
    </reaction>
</comment>
<comment type="catalytic activity">
    <reaction evidence="2">
        <text>L-glutamine + H2O = L-glutamate + NH4(+)</text>
        <dbReference type="Rhea" id="RHEA:15889"/>
        <dbReference type="ChEBI" id="CHEBI:15377"/>
        <dbReference type="ChEBI" id="CHEBI:28938"/>
        <dbReference type="ChEBI" id="CHEBI:29985"/>
        <dbReference type="ChEBI" id="CHEBI:58359"/>
    </reaction>
</comment>
<comment type="catalytic activity">
    <reaction evidence="2">
        <text>UTP + NH4(+) + ATP = CTP + ADP + phosphate + 2 H(+)</text>
        <dbReference type="Rhea" id="RHEA:16597"/>
        <dbReference type="ChEBI" id="CHEBI:15378"/>
        <dbReference type="ChEBI" id="CHEBI:28938"/>
        <dbReference type="ChEBI" id="CHEBI:30616"/>
        <dbReference type="ChEBI" id="CHEBI:37563"/>
        <dbReference type="ChEBI" id="CHEBI:43474"/>
        <dbReference type="ChEBI" id="CHEBI:46398"/>
        <dbReference type="ChEBI" id="CHEBI:456216"/>
    </reaction>
</comment>
<comment type="activity regulation">
    <text evidence="2">Allosterically activated by GTP, when glutamine is the substrate; GTP has no effect on the reaction when ammonia is the substrate. The allosteric effector GTP functions by stabilizing the protein conformation that binds the tetrahedral intermediate(s) formed during glutamine hydrolysis. Inhibited by the product CTP, via allosteric rather than competitive inhibition.</text>
</comment>
<comment type="pathway">
    <text evidence="2">Pyrimidine metabolism; CTP biosynthesis via de novo pathway; CTP from UDP: step 2/2.</text>
</comment>
<comment type="subunit">
    <text evidence="2">Homotetramer.</text>
</comment>
<comment type="miscellaneous">
    <text evidence="2">CTPSs have evolved a hybrid strategy for distinguishing between UTP and CTP. The overlapping regions of the product feedback inhibitory and substrate sites recognize a common feature in both compounds, the triphosphate moiety. To differentiate isosteric substrate and product pyrimidine rings, an additional pocket far from the expected kinase/ligase catalytic site, specifically recognizes the cytosine and ribose portions of the product inhibitor.</text>
</comment>
<comment type="similarity">
    <text evidence="2">Belongs to the CTP synthase family.</text>
</comment>
<keyword id="KW-0067">ATP-binding</keyword>
<keyword id="KW-0315">Glutamine amidotransferase</keyword>
<keyword id="KW-0436">Ligase</keyword>
<keyword id="KW-0460">Magnesium</keyword>
<keyword id="KW-0479">Metal-binding</keyword>
<keyword id="KW-0547">Nucleotide-binding</keyword>
<keyword id="KW-0665">Pyrimidine biosynthesis</keyword>
<keyword id="KW-1185">Reference proteome</keyword>
<feature type="initiator methionine" description="Removed" evidence="1">
    <location>
        <position position="1"/>
    </location>
</feature>
<feature type="chain" id="PRO_0000138219" description="CTP synthase">
    <location>
        <begin position="2"/>
        <end position="545"/>
    </location>
</feature>
<feature type="domain" description="Glutamine amidotransferase type-1" evidence="2">
    <location>
        <begin position="291"/>
        <end position="542"/>
    </location>
</feature>
<feature type="region of interest" description="Amidoligase domain" evidence="2">
    <location>
        <begin position="2"/>
        <end position="266"/>
    </location>
</feature>
<feature type="active site" description="Nucleophile; for glutamine hydrolysis" evidence="2">
    <location>
        <position position="379"/>
    </location>
</feature>
<feature type="active site" evidence="2">
    <location>
        <position position="515"/>
    </location>
</feature>
<feature type="active site" evidence="2">
    <location>
        <position position="517"/>
    </location>
</feature>
<feature type="binding site" evidence="2">
    <location>
        <position position="14"/>
    </location>
    <ligand>
        <name>CTP</name>
        <dbReference type="ChEBI" id="CHEBI:37563"/>
        <note>allosteric inhibitor</note>
    </ligand>
</feature>
<feature type="binding site" evidence="2">
    <location>
        <position position="14"/>
    </location>
    <ligand>
        <name>UTP</name>
        <dbReference type="ChEBI" id="CHEBI:46398"/>
    </ligand>
</feature>
<feature type="binding site" evidence="2">
    <location>
        <begin position="15"/>
        <end position="20"/>
    </location>
    <ligand>
        <name>ATP</name>
        <dbReference type="ChEBI" id="CHEBI:30616"/>
    </ligand>
</feature>
<feature type="binding site" evidence="2">
    <location>
        <position position="72"/>
    </location>
    <ligand>
        <name>ATP</name>
        <dbReference type="ChEBI" id="CHEBI:30616"/>
    </ligand>
</feature>
<feature type="binding site" evidence="2">
    <location>
        <position position="72"/>
    </location>
    <ligand>
        <name>Mg(2+)</name>
        <dbReference type="ChEBI" id="CHEBI:18420"/>
    </ligand>
</feature>
<feature type="binding site" evidence="2">
    <location>
        <position position="140"/>
    </location>
    <ligand>
        <name>Mg(2+)</name>
        <dbReference type="ChEBI" id="CHEBI:18420"/>
    </ligand>
</feature>
<feature type="binding site" evidence="2">
    <location>
        <begin position="147"/>
        <end position="149"/>
    </location>
    <ligand>
        <name>CTP</name>
        <dbReference type="ChEBI" id="CHEBI:37563"/>
        <note>allosteric inhibitor</note>
    </ligand>
</feature>
<feature type="binding site" evidence="2">
    <location>
        <begin position="187"/>
        <end position="192"/>
    </location>
    <ligand>
        <name>CTP</name>
        <dbReference type="ChEBI" id="CHEBI:37563"/>
        <note>allosteric inhibitor</note>
    </ligand>
</feature>
<feature type="binding site" evidence="2">
    <location>
        <begin position="187"/>
        <end position="192"/>
    </location>
    <ligand>
        <name>UTP</name>
        <dbReference type="ChEBI" id="CHEBI:46398"/>
    </ligand>
</feature>
<feature type="binding site" evidence="2">
    <location>
        <position position="223"/>
    </location>
    <ligand>
        <name>CTP</name>
        <dbReference type="ChEBI" id="CHEBI:37563"/>
        <note>allosteric inhibitor</note>
    </ligand>
</feature>
<feature type="binding site" evidence="2">
    <location>
        <position position="223"/>
    </location>
    <ligand>
        <name>UTP</name>
        <dbReference type="ChEBI" id="CHEBI:46398"/>
    </ligand>
</feature>
<feature type="binding site" evidence="2">
    <location>
        <begin position="239"/>
        <end position="241"/>
    </location>
    <ligand>
        <name>ATP</name>
        <dbReference type="ChEBI" id="CHEBI:30616"/>
    </ligand>
</feature>
<feature type="binding site" evidence="2">
    <location>
        <position position="352"/>
    </location>
    <ligand>
        <name>L-glutamine</name>
        <dbReference type="ChEBI" id="CHEBI:58359"/>
    </ligand>
</feature>
<feature type="binding site" evidence="2">
    <location>
        <begin position="380"/>
        <end position="383"/>
    </location>
    <ligand>
        <name>L-glutamine</name>
        <dbReference type="ChEBI" id="CHEBI:58359"/>
    </ligand>
</feature>
<feature type="binding site" evidence="2">
    <location>
        <position position="403"/>
    </location>
    <ligand>
        <name>L-glutamine</name>
        <dbReference type="ChEBI" id="CHEBI:58359"/>
    </ligand>
</feature>
<feature type="binding site" evidence="2">
    <location>
        <position position="470"/>
    </location>
    <ligand>
        <name>L-glutamine</name>
        <dbReference type="ChEBI" id="CHEBI:58359"/>
    </ligand>
</feature>
<organism>
    <name type="scientific">Salmonella typhimurium (strain LT2 / SGSC1412 / ATCC 700720)</name>
    <dbReference type="NCBI Taxonomy" id="99287"/>
    <lineage>
        <taxon>Bacteria</taxon>
        <taxon>Pseudomonadati</taxon>
        <taxon>Pseudomonadota</taxon>
        <taxon>Gammaproteobacteria</taxon>
        <taxon>Enterobacterales</taxon>
        <taxon>Enterobacteriaceae</taxon>
        <taxon>Salmonella</taxon>
    </lineage>
</organism>
<proteinExistence type="inferred from homology"/>
<dbReference type="EC" id="6.3.4.2" evidence="2"/>
<dbReference type="EMBL" id="AE006468">
    <property type="protein sequence ID" value="AAL21833.1"/>
    <property type="molecule type" value="Genomic_DNA"/>
</dbReference>
<dbReference type="RefSeq" id="NP_461874.1">
    <property type="nucleotide sequence ID" value="NC_003197.2"/>
</dbReference>
<dbReference type="RefSeq" id="WP_000210863.1">
    <property type="nucleotide sequence ID" value="NC_003197.2"/>
</dbReference>
<dbReference type="SMR" id="P65921"/>
<dbReference type="STRING" id="99287.STM2953"/>
<dbReference type="PaxDb" id="99287-STM2953"/>
<dbReference type="GeneID" id="1254476"/>
<dbReference type="KEGG" id="stm:STM2953"/>
<dbReference type="PATRIC" id="fig|99287.12.peg.3123"/>
<dbReference type="HOGENOM" id="CLU_011675_5_0_6"/>
<dbReference type="OMA" id="EFNNAYR"/>
<dbReference type="PhylomeDB" id="P65921"/>
<dbReference type="BioCyc" id="SENT99287:STM2953-MONOMER"/>
<dbReference type="UniPathway" id="UPA00159">
    <property type="reaction ID" value="UER00277"/>
</dbReference>
<dbReference type="Proteomes" id="UP000001014">
    <property type="component" value="Chromosome"/>
</dbReference>
<dbReference type="GO" id="GO:0005829">
    <property type="term" value="C:cytosol"/>
    <property type="evidence" value="ECO:0000318"/>
    <property type="project" value="GO_Central"/>
</dbReference>
<dbReference type="GO" id="GO:0005524">
    <property type="term" value="F:ATP binding"/>
    <property type="evidence" value="ECO:0007669"/>
    <property type="project" value="UniProtKB-KW"/>
</dbReference>
<dbReference type="GO" id="GO:0003883">
    <property type="term" value="F:CTP synthase activity"/>
    <property type="evidence" value="ECO:0000318"/>
    <property type="project" value="GO_Central"/>
</dbReference>
<dbReference type="GO" id="GO:0004359">
    <property type="term" value="F:glutaminase activity"/>
    <property type="evidence" value="ECO:0007669"/>
    <property type="project" value="RHEA"/>
</dbReference>
<dbReference type="GO" id="GO:0042802">
    <property type="term" value="F:identical protein binding"/>
    <property type="evidence" value="ECO:0000318"/>
    <property type="project" value="GO_Central"/>
</dbReference>
<dbReference type="GO" id="GO:0046872">
    <property type="term" value="F:metal ion binding"/>
    <property type="evidence" value="ECO:0007669"/>
    <property type="project" value="UniProtKB-KW"/>
</dbReference>
<dbReference type="GO" id="GO:0044210">
    <property type="term" value="P:'de novo' CTP biosynthetic process"/>
    <property type="evidence" value="ECO:0007669"/>
    <property type="project" value="UniProtKB-UniRule"/>
</dbReference>
<dbReference type="GO" id="GO:0006241">
    <property type="term" value="P:CTP biosynthetic process"/>
    <property type="evidence" value="ECO:0000318"/>
    <property type="project" value="GO_Central"/>
</dbReference>
<dbReference type="GO" id="GO:0019856">
    <property type="term" value="P:pyrimidine nucleobase biosynthetic process"/>
    <property type="evidence" value="ECO:0000318"/>
    <property type="project" value="GO_Central"/>
</dbReference>
<dbReference type="CDD" id="cd03113">
    <property type="entry name" value="CTPS_N"/>
    <property type="match status" value="1"/>
</dbReference>
<dbReference type="CDD" id="cd01746">
    <property type="entry name" value="GATase1_CTP_Synthase"/>
    <property type="match status" value="1"/>
</dbReference>
<dbReference type="FunFam" id="3.40.50.300:FF:000009">
    <property type="entry name" value="CTP synthase"/>
    <property type="match status" value="1"/>
</dbReference>
<dbReference type="FunFam" id="3.40.50.880:FF:000002">
    <property type="entry name" value="CTP synthase"/>
    <property type="match status" value="1"/>
</dbReference>
<dbReference type="Gene3D" id="3.40.50.880">
    <property type="match status" value="1"/>
</dbReference>
<dbReference type="Gene3D" id="3.40.50.300">
    <property type="entry name" value="P-loop containing nucleotide triphosphate hydrolases"/>
    <property type="match status" value="1"/>
</dbReference>
<dbReference type="HAMAP" id="MF_01227">
    <property type="entry name" value="PyrG"/>
    <property type="match status" value="1"/>
</dbReference>
<dbReference type="InterPro" id="IPR029062">
    <property type="entry name" value="Class_I_gatase-like"/>
</dbReference>
<dbReference type="InterPro" id="IPR004468">
    <property type="entry name" value="CTP_synthase"/>
</dbReference>
<dbReference type="InterPro" id="IPR017456">
    <property type="entry name" value="CTP_synthase_N"/>
</dbReference>
<dbReference type="InterPro" id="IPR017926">
    <property type="entry name" value="GATASE"/>
</dbReference>
<dbReference type="InterPro" id="IPR033828">
    <property type="entry name" value="GATase1_CTP_Synthase"/>
</dbReference>
<dbReference type="InterPro" id="IPR027417">
    <property type="entry name" value="P-loop_NTPase"/>
</dbReference>
<dbReference type="NCBIfam" id="NF003792">
    <property type="entry name" value="PRK05380.1"/>
    <property type="match status" value="1"/>
</dbReference>
<dbReference type="NCBIfam" id="TIGR00337">
    <property type="entry name" value="PyrG"/>
    <property type="match status" value="1"/>
</dbReference>
<dbReference type="PANTHER" id="PTHR11550">
    <property type="entry name" value="CTP SYNTHASE"/>
    <property type="match status" value="1"/>
</dbReference>
<dbReference type="PANTHER" id="PTHR11550:SF0">
    <property type="entry name" value="CTP SYNTHASE-RELATED"/>
    <property type="match status" value="1"/>
</dbReference>
<dbReference type="Pfam" id="PF06418">
    <property type="entry name" value="CTP_synth_N"/>
    <property type="match status" value="1"/>
</dbReference>
<dbReference type="Pfam" id="PF00117">
    <property type="entry name" value="GATase"/>
    <property type="match status" value="1"/>
</dbReference>
<dbReference type="SUPFAM" id="SSF52317">
    <property type="entry name" value="Class I glutamine amidotransferase-like"/>
    <property type="match status" value="1"/>
</dbReference>
<dbReference type="SUPFAM" id="SSF52540">
    <property type="entry name" value="P-loop containing nucleoside triphosphate hydrolases"/>
    <property type="match status" value="1"/>
</dbReference>
<dbReference type="PROSITE" id="PS51273">
    <property type="entry name" value="GATASE_TYPE_1"/>
    <property type="match status" value="1"/>
</dbReference>
<sequence>MTTNYIFVTGGVVSSLGKGIAAASLAAILEARGLNVTIMKLDPYINVDPGTMSPIQHGEVFVTEDGAETDLDLGHYERFIRTKMSRRNNFTTGRIYSDVLRKERRGDYLGATVQVIPHITNAIKERVLEGGEGHDVVLVEIGGTVGDIESLPFLEAIRQLAVDIGREHALFMHLTLVPYLAAAGEVKTKPTQHSVKELLSIGIQPDILICRSDRAVPANERAKIALFCNVPEKAVISMKDVDSIYKIPGLLKSQGLDDYICKRFSLNCPEANLSEWEQVIYEEANPAGEVTIGMVGKYIELPDAYKSVIEALKHGGLKNRVTVNIKLIDSQDVETRGVEILKDLDAILIPGGFGYRGVEGKIATARYARENNIPYLGICLGMQVALIEFARNVAGMDNANSTEFVPDCKYPVVALITEWRDEDGNVEVRSEKSDLGGTMRLGAQQCQLSDDSLVRQLYGASTIVERHRHRYEVNNMLLKQIEAAGLRVAGRSGDDQLVEIIEVPNHPWFVACQFHPEFTSTPRDGHPLFAGFVKAANEHQKRQAK</sequence>
<name>PYRG_SALTY</name>